<dbReference type="EMBL" id="CP000440">
    <property type="protein sequence ID" value="ABI86044.1"/>
    <property type="molecule type" value="Genomic_DNA"/>
</dbReference>
<dbReference type="RefSeq" id="WP_006476999.1">
    <property type="nucleotide sequence ID" value="NZ_CP009798.1"/>
</dbReference>
<dbReference type="SMR" id="Q0BIH9"/>
<dbReference type="GeneID" id="98106573"/>
<dbReference type="KEGG" id="bam:Bamb_0485"/>
<dbReference type="PATRIC" id="fig|339670.21.peg.1121"/>
<dbReference type="eggNOG" id="COG0211">
    <property type="taxonomic scope" value="Bacteria"/>
</dbReference>
<dbReference type="Proteomes" id="UP000000662">
    <property type="component" value="Chromosome 1"/>
</dbReference>
<dbReference type="GO" id="GO:0022625">
    <property type="term" value="C:cytosolic large ribosomal subunit"/>
    <property type="evidence" value="ECO:0007669"/>
    <property type="project" value="TreeGrafter"/>
</dbReference>
<dbReference type="GO" id="GO:0003735">
    <property type="term" value="F:structural constituent of ribosome"/>
    <property type="evidence" value="ECO:0007669"/>
    <property type="project" value="InterPro"/>
</dbReference>
<dbReference type="GO" id="GO:0006412">
    <property type="term" value="P:translation"/>
    <property type="evidence" value="ECO:0007669"/>
    <property type="project" value="UniProtKB-UniRule"/>
</dbReference>
<dbReference type="FunFam" id="2.40.50.100:FF:000001">
    <property type="entry name" value="50S ribosomal protein L27"/>
    <property type="match status" value="1"/>
</dbReference>
<dbReference type="Gene3D" id="2.40.50.100">
    <property type="match status" value="1"/>
</dbReference>
<dbReference type="HAMAP" id="MF_00539">
    <property type="entry name" value="Ribosomal_bL27"/>
    <property type="match status" value="1"/>
</dbReference>
<dbReference type="InterPro" id="IPR001684">
    <property type="entry name" value="Ribosomal_bL27"/>
</dbReference>
<dbReference type="InterPro" id="IPR018261">
    <property type="entry name" value="Ribosomal_bL27_CS"/>
</dbReference>
<dbReference type="NCBIfam" id="TIGR00062">
    <property type="entry name" value="L27"/>
    <property type="match status" value="1"/>
</dbReference>
<dbReference type="PANTHER" id="PTHR15893:SF0">
    <property type="entry name" value="LARGE RIBOSOMAL SUBUNIT PROTEIN BL27M"/>
    <property type="match status" value="1"/>
</dbReference>
<dbReference type="PANTHER" id="PTHR15893">
    <property type="entry name" value="RIBOSOMAL PROTEIN L27"/>
    <property type="match status" value="1"/>
</dbReference>
<dbReference type="Pfam" id="PF01016">
    <property type="entry name" value="Ribosomal_L27"/>
    <property type="match status" value="1"/>
</dbReference>
<dbReference type="PRINTS" id="PR00063">
    <property type="entry name" value="RIBOSOMALL27"/>
</dbReference>
<dbReference type="SUPFAM" id="SSF110324">
    <property type="entry name" value="Ribosomal L27 protein-like"/>
    <property type="match status" value="1"/>
</dbReference>
<dbReference type="PROSITE" id="PS00831">
    <property type="entry name" value="RIBOSOMAL_L27"/>
    <property type="match status" value="1"/>
</dbReference>
<proteinExistence type="inferred from homology"/>
<sequence length="87" mass="9089">MAHKKAGGSSRNGRDSESKRLGVKVYGGQAINAGGIIVRQRGTRMHAGENVGMGKDHTLFALVDGHVKFATKGADKKHLVIVVPAAA</sequence>
<organism>
    <name type="scientific">Burkholderia ambifaria (strain ATCC BAA-244 / DSM 16087 / CCUG 44356 / LMG 19182 / AMMD)</name>
    <name type="common">Burkholderia cepacia (strain AMMD)</name>
    <dbReference type="NCBI Taxonomy" id="339670"/>
    <lineage>
        <taxon>Bacteria</taxon>
        <taxon>Pseudomonadati</taxon>
        <taxon>Pseudomonadota</taxon>
        <taxon>Betaproteobacteria</taxon>
        <taxon>Burkholderiales</taxon>
        <taxon>Burkholderiaceae</taxon>
        <taxon>Burkholderia</taxon>
        <taxon>Burkholderia cepacia complex</taxon>
    </lineage>
</organism>
<reference key="1">
    <citation type="submission" date="2006-08" db="EMBL/GenBank/DDBJ databases">
        <title>Complete sequence of chromosome 1 of Burkholderia cepacia AMMD.</title>
        <authorList>
            <person name="Copeland A."/>
            <person name="Lucas S."/>
            <person name="Lapidus A."/>
            <person name="Barry K."/>
            <person name="Detter J.C."/>
            <person name="Glavina del Rio T."/>
            <person name="Hammon N."/>
            <person name="Israni S."/>
            <person name="Pitluck S."/>
            <person name="Bruce D."/>
            <person name="Chain P."/>
            <person name="Malfatti S."/>
            <person name="Shin M."/>
            <person name="Vergez L."/>
            <person name="Schmutz J."/>
            <person name="Larimer F."/>
            <person name="Land M."/>
            <person name="Hauser L."/>
            <person name="Kyrpides N."/>
            <person name="Kim E."/>
            <person name="Parke J."/>
            <person name="Coenye T."/>
            <person name="Konstantinidis K."/>
            <person name="Ramette A."/>
            <person name="Tiedje J."/>
            <person name="Richardson P."/>
        </authorList>
    </citation>
    <scope>NUCLEOTIDE SEQUENCE [LARGE SCALE GENOMIC DNA]</scope>
    <source>
        <strain>ATCC BAA-244 / DSM 16087 / CCUG 44356 / LMG 19182 / AMMD</strain>
    </source>
</reference>
<name>RL27_BURCM</name>
<accession>Q0BIH9</accession>
<evidence type="ECO:0000255" key="1">
    <source>
        <dbReference type="HAMAP-Rule" id="MF_00539"/>
    </source>
</evidence>
<evidence type="ECO:0000256" key="2">
    <source>
        <dbReference type="SAM" id="MobiDB-lite"/>
    </source>
</evidence>
<evidence type="ECO:0000305" key="3"/>
<feature type="chain" id="PRO_1000017428" description="Large ribosomal subunit protein bL27">
    <location>
        <begin position="1"/>
        <end position="87"/>
    </location>
</feature>
<feature type="region of interest" description="Disordered" evidence="2">
    <location>
        <begin position="1"/>
        <end position="21"/>
    </location>
</feature>
<protein>
    <recommendedName>
        <fullName evidence="1">Large ribosomal subunit protein bL27</fullName>
    </recommendedName>
    <alternativeName>
        <fullName evidence="3">50S ribosomal protein L27</fullName>
    </alternativeName>
</protein>
<comment type="similarity">
    <text evidence="1">Belongs to the bacterial ribosomal protein bL27 family.</text>
</comment>
<keyword id="KW-0687">Ribonucleoprotein</keyword>
<keyword id="KW-0689">Ribosomal protein</keyword>
<gene>
    <name evidence="1" type="primary">rpmA</name>
    <name type="ordered locus">Bamb_0485</name>
</gene>